<feature type="chain" id="PRO_1000089164" description="Endoribonuclease YbeY">
    <location>
        <begin position="1"/>
        <end position="161"/>
    </location>
</feature>
<feature type="binding site" evidence="1">
    <location>
        <position position="120"/>
    </location>
    <ligand>
        <name>Zn(2+)</name>
        <dbReference type="ChEBI" id="CHEBI:29105"/>
        <note>catalytic</note>
    </ligand>
</feature>
<feature type="binding site" evidence="1">
    <location>
        <position position="124"/>
    </location>
    <ligand>
        <name>Zn(2+)</name>
        <dbReference type="ChEBI" id="CHEBI:29105"/>
        <note>catalytic</note>
    </ligand>
</feature>
<feature type="binding site" evidence="1">
    <location>
        <position position="130"/>
    </location>
    <ligand>
        <name>Zn(2+)</name>
        <dbReference type="ChEBI" id="CHEBI:29105"/>
        <note>catalytic</note>
    </ligand>
</feature>
<reference key="1">
    <citation type="journal article" date="2008" name="Genome Res.">
        <title>Chlamydia trachomatis: genome sequence analysis of lymphogranuloma venereum isolates.</title>
        <authorList>
            <person name="Thomson N.R."/>
            <person name="Holden M.T.G."/>
            <person name="Carder C."/>
            <person name="Lennard N."/>
            <person name="Lockey S.J."/>
            <person name="Marsh P."/>
            <person name="Skipp P."/>
            <person name="O'Connor C.D."/>
            <person name="Goodhead I."/>
            <person name="Norbertzcak H."/>
            <person name="Harris B."/>
            <person name="Ormond D."/>
            <person name="Rance R."/>
            <person name="Quail M.A."/>
            <person name="Parkhill J."/>
            <person name="Stephens R.S."/>
            <person name="Clarke I.N."/>
        </authorList>
    </citation>
    <scope>NUCLEOTIDE SEQUENCE [LARGE SCALE GENOMIC DNA]</scope>
    <source>
        <strain>UCH-1/proctitis</strain>
    </source>
</reference>
<sequence length="161" mass="18456">MLILDRSSPQIFISNEQQDVSIDLQSAQRLVVLFLELQKVSTDQVYVYFLDDTALAQLHDEQFSDPSLTDTITLPIDKPGIASFPHVLGEAFVSPKAAMRFLEQYTEDQLYHEISRYVVHSLLHMLGYDDQTDEDKRIMQEQEDVSLSFLAEHQALLRPAV</sequence>
<dbReference type="EC" id="3.1.-.-" evidence="1"/>
<dbReference type="EMBL" id="AM884177">
    <property type="protein sequence ID" value="CAP07074.1"/>
    <property type="molecule type" value="Genomic_DNA"/>
</dbReference>
<dbReference type="RefSeq" id="WP_009872646.1">
    <property type="nucleotide sequence ID" value="NC_010280.2"/>
</dbReference>
<dbReference type="SMR" id="B0BC59"/>
<dbReference type="KEGG" id="ctl:CTLon_0677"/>
<dbReference type="HOGENOM" id="CLU_106710_2_0_0"/>
<dbReference type="Proteomes" id="UP001154401">
    <property type="component" value="Chromosome"/>
</dbReference>
<dbReference type="GO" id="GO:0005737">
    <property type="term" value="C:cytoplasm"/>
    <property type="evidence" value="ECO:0007669"/>
    <property type="project" value="UniProtKB-SubCell"/>
</dbReference>
<dbReference type="GO" id="GO:0004222">
    <property type="term" value="F:metalloendopeptidase activity"/>
    <property type="evidence" value="ECO:0007669"/>
    <property type="project" value="InterPro"/>
</dbReference>
<dbReference type="GO" id="GO:0004521">
    <property type="term" value="F:RNA endonuclease activity"/>
    <property type="evidence" value="ECO:0007669"/>
    <property type="project" value="UniProtKB-UniRule"/>
</dbReference>
<dbReference type="GO" id="GO:0008270">
    <property type="term" value="F:zinc ion binding"/>
    <property type="evidence" value="ECO:0007669"/>
    <property type="project" value="UniProtKB-UniRule"/>
</dbReference>
<dbReference type="GO" id="GO:0006364">
    <property type="term" value="P:rRNA processing"/>
    <property type="evidence" value="ECO:0007669"/>
    <property type="project" value="UniProtKB-UniRule"/>
</dbReference>
<dbReference type="Gene3D" id="3.40.390.30">
    <property type="entry name" value="Metalloproteases ('zincins'), catalytic domain"/>
    <property type="match status" value="1"/>
</dbReference>
<dbReference type="HAMAP" id="MF_00009">
    <property type="entry name" value="Endoribonucl_YbeY"/>
    <property type="match status" value="1"/>
</dbReference>
<dbReference type="InterPro" id="IPR023091">
    <property type="entry name" value="MetalPrtase_cat_dom_sf_prd"/>
</dbReference>
<dbReference type="InterPro" id="IPR002036">
    <property type="entry name" value="YbeY"/>
</dbReference>
<dbReference type="NCBIfam" id="TIGR00043">
    <property type="entry name" value="rRNA maturation RNase YbeY"/>
    <property type="match status" value="1"/>
</dbReference>
<dbReference type="Pfam" id="PF02130">
    <property type="entry name" value="YbeY"/>
    <property type="match status" value="1"/>
</dbReference>
<dbReference type="SUPFAM" id="SSF55486">
    <property type="entry name" value="Metalloproteases ('zincins'), catalytic domain"/>
    <property type="match status" value="1"/>
</dbReference>
<evidence type="ECO:0000255" key="1">
    <source>
        <dbReference type="HAMAP-Rule" id="MF_00009"/>
    </source>
</evidence>
<proteinExistence type="inferred from homology"/>
<protein>
    <recommendedName>
        <fullName evidence="1">Endoribonuclease YbeY</fullName>
        <ecNumber evidence="1">3.1.-.-</ecNumber>
    </recommendedName>
</protein>
<keyword id="KW-0963">Cytoplasm</keyword>
<keyword id="KW-0255">Endonuclease</keyword>
<keyword id="KW-0378">Hydrolase</keyword>
<keyword id="KW-0479">Metal-binding</keyword>
<keyword id="KW-0540">Nuclease</keyword>
<keyword id="KW-0690">Ribosome biogenesis</keyword>
<keyword id="KW-0698">rRNA processing</keyword>
<keyword id="KW-0862">Zinc</keyword>
<name>YBEY_CHLTB</name>
<gene>
    <name evidence="1" type="primary">ybeY</name>
    <name type="ordered locus">CTLon_0677</name>
</gene>
<comment type="function">
    <text evidence="1">Single strand-specific metallo-endoribonuclease involved in late-stage 70S ribosome quality control and in maturation of the 3' terminus of the 16S rRNA.</text>
</comment>
<comment type="cofactor">
    <cofactor evidence="1">
        <name>Zn(2+)</name>
        <dbReference type="ChEBI" id="CHEBI:29105"/>
    </cofactor>
    <text evidence="1">Binds 1 zinc ion.</text>
</comment>
<comment type="subcellular location">
    <subcellularLocation>
        <location evidence="1">Cytoplasm</location>
    </subcellularLocation>
</comment>
<comment type="similarity">
    <text evidence="1">Belongs to the endoribonuclease YbeY family.</text>
</comment>
<accession>B0BC59</accession>
<organism>
    <name type="scientific">Chlamydia trachomatis serovar L2b (strain UCH-1/proctitis)</name>
    <dbReference type="NCBI Taxonomy" id="471473"/>
    <lineage>
        <taxon>Bacteria</taxon>
        <taxon>Pseudomonadati</taxon>
        <taxon>Chlamydiota</taxon>
        <taxon>Chlamydiia</taxon>
        <taxon>Chlamydiales</taxon>
        <taxon>Chlamydiaceae</taxon>
        <taxon>Chlamydia/Chlamydophila group</taxon>
        <taxon>Chlamydia</taxon>
    </lineage>
</organism>